<dbReference type="EMBL" id="CP000887">
    <property type="protein sequence ID" value="ACD72651.1"/>
    <property type="molecule type" value="Genomic_DNA"/>
</dbReference>
<dbReference type="RefSeq" id="WP_002964337.1">
    <property type="nucleotide sequence ID" value="NC_010742.1"/>
</dbReference>
<dbReference type="SMR" id="B2S654"/>
<dbReference type="GeneID" id="93016464"/>
<dbReference type="KEGG" id="bmc:BAbS19_I11460"/>
<dbReference type="HOGENOM" id="CLU_074407_2_0_5"/>
<dbReference type="Proteomes" id="UP000002565">
    <property type="component" value="Chromosome 1"/>
</dbReference>
<dbReference type="GO" id="GO:0022625">
    <property type="term" value="C:cytosolic large ribosomal subunit"/>
    <property type="evidence" value="ECO:0007669"/>
    <property type="project" value="TreeGrafter"/>
</dbReference>
<dbReference type="GO" id="GO:0003735">
    <property type="term" value="F:structural constituent of ribosome"/>
    <property type="evidence" value="ECO:0007669"/>
    <property type="project" value="InterPro"/>
</dbReference>
<dbReference type="GO" id="GO:0006412">
    <property type="term" value="P:translation"/>
    <property type="evidence" value="ECO:0007669"/>
    <property type="project" value="UniProtKB-UniRule"/>
</dbReference>
<dbReference type="FunFam" id="3.90.1030.10:FF:000001">
    <property type="entry name" value="50S ribosomal protein L17"/>
    <property type="match status" value="1"/>
</dbReference>
<dbReference type="Gene3D" id="3.90.1030.10">
    <property type="entry name" value="Ribosomal protein L17"/>
    <property type="match status" value="1"/>
</dbReference>
<dbReference type="HAMAP" id="MF_01368">
    <property type="entry name" value="Ribosomal_bL17"/>
    <property type="match status" value="1"/>
</dbReference>
<dbReference type="InterPro" id="IPR000456">
    <property type="entry name" value="Ribosomal_bL17"/>
</dbReference>
<dbReference type="InterPro" id="IPR047859">
    <property type="entry name" value="Ribosomal_bL17_CS"/>
</dbReference>
<dbReference type="InterPro" id="IPR036373">
    <property type="entry name" value="Ribosomal_bL17_sf"/>
</dbReference>
<dbReference type="NCBIfam" id="TIGR00059">
    <property type="entry name" value="L17"/>
    <property type="match status" value="1"/>
</dbReference>
<dbReference type="PANTHER" id="PTHR14413:SF16">
    <property type="entry name" value="LARGE RIBOSOMAL SUBUNIT PROTEIN BL17M"/>
    <property type="match status" value="1"/>
</dbReference>
<dbReference type="PANTHER" id="PTHR14413">
    <property type="entry name" value="RIBOSOMAL PROTEIN L17"/>
    <property type="match status" value="1"/>
</dbReference>
<dbReference type="Pfam" id="PF01196">
    <property type="entry name" value="Ribosomal_L17"/>
    <property type="match status" value="1"/>
</dbReference>
<dbReference type="SUPFAM" id="SSF64263">
    <property type="entry name" value="Prokaryotic ribosomal protein L17"/>
    <property type="match status" value="1"/>
</dbReference>
<dbReference type="PROSITE" id="PS01167">
    <property type="entry name" value="RIBOSOMAL_L17"/>
    <property type="match status" value="1"/>
</dbReference>
<protein>
    <recommendedName>
        <fullName evidence="1">Large ribosomal subunit protein bL17</fullName>
    </recommendedName>
    <alternativeName>
        <fullName evidence="2">50S ribosomal protein L17</fullName>
    </alternativeName>
</protein>
<proteinExistence type="inferred from homology"/>
<gene>
    <name evidence="1" type="primary">rplQ</name>
    <name type="ordered locus">BAbS19_I11460</name>
</gene>
<accession>B2S654</accession>
<feature type="chain" id="PRO_1000144386" description="Large ribosomal subunit protein bL17">
    <location>
        <begin position="1"/>
        <end position="142"/>
    </location>
</feature>
<comment type="subunit">
    <text evidence="1">Part of the 50S ribosomal subunit. Contacts protein L32.</text>
</comment>
<comment type="similarity">
    <text evidence="1">Belongs to the bacterial ribosomal protein bL17 family.</text>
</comment>
<organism>
    <name type="scientific">Brucella abortus (strain S19)</name>
    <dbReference type="NCBI Taxonomy" id="430066"/>
    <lineage>
        <taxon>Bacteria</taxon>
        <taxon>Pseudomonadati</taxon>
        <taxon>Pseudomonadota</taxon>
        <taxon>Alphaproteobacteria</taxon>
        <taxon>Hyphomicrobiales</taxon>
        <taxon>Brucellaceae</taxon>
        <taxon>Brucella/Ochrobactrum group</taxon>
        <taxon>Brucella</taxon>
    </lineage>
</organism>
<sequence>MRHGNGYRKLNRTASHRKAMFANMAASLIEHEQIVTTLPKAKEIRPIVEKLVTLGKRGDLHARRQAISAIRDVRLVAKLFDTLAARYATRNGGYIRIMKAGFRAGDNAPLAVVEFVERDVDAKGKADRARVEAEAAAEADAA</sequence>
<reference key="1">
    <citation type="journal article" date="2008" name="PLoS ONE">
        <title>Genome sequence of Brucella abortus vaccine strain S19 compared to virulent strains yields candidate virulence genes.</title>
        <authorList>
            <person name="Crasta O.R."/>
            <person name="Folkerts O."/>
            <person name="Fei Z."/>
            <person name="Mane S.P."/>
            <person name="Evans C."/>
            <person name="Martino-Catt S."/>
            <person name="Bricker B."/>
            <person name="Yu G."/>
            <person name="Du L."/>
            <person name="Sobral B.W."/>
        </authorList>
    </citation>
    <scope>NUCLEOTIDE SEQUENCE [LARGE SCALE GENOMIC DNA]</scope>
    <source>
        <strain>S19</strain>
    </source>
</reference>
<evidence type="ECO:0000255" key="1">
    <source>
        <dbReference type="HAMAP-Rule" id="MF_01368"/>
    </source>
</evidence>
<evidence type="ECO:0000305" key="2"/>
<keyword id="KW-0687">Ribonucleoprotein</keyword>
<keyword id="KW-0689">Ribosomal protein</keyword>
<name>RL17_BRUA1</name>